<proteinExistence type="inferred from homology"/>
<accession>Q834V4</accession>
<gene>
    <name evidence="1" type="primary">obg</name>
    <name type="ordered locus">EF_1527</name>
</gene>
<reference key="1">
    <citation type="journal article" date="2003" name="Science">
        <title>Role of mobile DNA in the evolution of vancomycin-resistant Enterococcus faecalis.</title>
        <authorList>
            <person name="Paulsen I.T."/>
            <person name="Banerjei L."/>
            <person name="Myers G.S.A."/>
            <person name="Nelson K.E."/>
            <person name="Seshadri R."/>
            <person name="Read T.D."/>
            <person name="Fouts D.E."/>
            <person name="Eisen J.A."/>
            <person name="Gill S.R."/>
            <person name="Heidelberg J.F."/>
            <person name="Tettelin H."/>
            <person name="Dodson R.J."/>
            <person name="Umayam L.A."/>
            <person name="Brinkac L.M."/>
            <person name="Beanan M.J."/>
            <person name="Daugherty S.C."/>
            <person name="DeBoy R.T."/>
            <person name="Durkin S.A."/>
            <person name="Kolonay J.F."/>
            <person name="Madupu R."/>
            <person name="Nelson W.C."/>
            <person name="Vamathevan J.J."/>
            <person name="Tran B."/>
            <person name="Upton J."/>
            <person name="Hansen T."/>
            <person name="Shetty J."/>
            <person name="Khouri H.M."/>
            <person name="Utterback T.R."/>
            <person name="Radune D."/>
            <person name="Ketchum K.A."/>
            <person name="Dougherty B.A."/>
            <person name="Fraser C.M."/>
        </authorList>
    </citation>
    <scope>NUCLEOTIDE SEQUENCE [LARGE SCALE GENOMIC DNA]</scope>
    <source>
        <strain>ATCC 700802 / V583</strain>
    </source>
</reference>
<sequence>MSMFLDQVTIDVKAGKGGDGMVAFRREKYVPDGGPAGGDGGRGGDVVLVVEEGLRTLMDFRFNRHFKATPGENGMSKGMHGRGSEDLLVKVPPGTTVRDAETGALIGDLIENGQTLVVAKGGRGGRGNIRFASPRNPAPEIAENGEPGQERKIELELKVLADVGLVGFPSVGKSTLLSVISSARPKIGAYHFTTLVPNLGMVTTSDGRSFAAADLPGLIEGASQGVGLGTQFLRHIERTRVILHVIDMSGMEGRDPYEDYLAINKELASHNLRLMERPQIIVANKMDMPEAEENLAKFKEQLAKERTDEYADELPIFPISGVTRKGIEPLLNATADLLEVTPEFPLYEDEVVEEETVRYGFQPEGPEFTIDREPDASWVLSGEKLEKLFEMTNFDHDETVMRFARQLRGMGVDEALRARGAKDGDIVRIGNFEFEFVE</sequence>
<protein>
    <recommendedName>
        <fullName evidence="1">GTPase Obg</fullName>
        <ecNumber evidence="1">3.6.5.-</ecNumber>
    </recommendedName>
    <alternativeName>
        <fullName evidence="1">GTP-binding protein Obg</fullName>
    </alternativeName>
</protein>
<feature type="chain" id="PRO_0000385906" description="GTPase Obg">
    <location>
        <begin position="1"/>
        <end position="438"/>
    </location>
</feature>
<feature type="domain" description="Obg" evidence="3">
    <location>
        <begin position="2"/>
        <end position="160"/>
    </location>
</feature>
<feature type="domain" description="OBG-type G" evidence="1">
    <location>
        <begin position="161"/>
        <end position="339"/>
    </location>
</feature>
<feature type="domain" description="OCT" evidence="2">
    <location>
        <begin position="360"/>
        <end position="438"/>
    </location>
</feature>
<feature type="region of interest" description="Disordered" evidence="4">
    <location>
        <begin position="128"/>
        <end position="147"/>
    </location>
</feature>
<feature type="binding site" evidence="1">
    <location>
        <begin position="167"/>
        <end position="174"/>
    </location>
    <ligand>
        <name>GTP</name>
        <dbReference type="ChEBI" id="CHEBI:37565"/>
    </ligand>
</feature>
<feature type="binding site" evidence="1">
    <location>
        <position position="174"/>
    </location>
    <ligand>
        <name>Mg(2+)</name>
        <dbReference type="ChEBI" id="CHEBI:18420"/>
    </ligand>
</feature>
<feature type="binding site" evidence="1">
    <location>
        <begin position="192"/>
        <end position="196"/>
    </location>
    <ligand>
        <name>GTP</name>
        <dbReference type="ChEBI" id="CHEBI:37565"/>
    </ligand>
</feature>
<feature type="binding site" evidence="1">
    <location>
        <position position="194"/>
    </location>
    <ligand>
        <name>Mg(2+)</name>
        <dbReference type="ChEBI" id="CHEBI:18420"/>
    </ligand>
</feature>
<feature type="binding site" evidence="1">
    <location>
        <begin position="214"/>
        <end position="217"/>
    </location>
    <ligand>
        <name>GTP</name>
        <dbReference type="ChEBI" id="CHEBI:37565"/>
    </ligand>
</feature>
<feature type="binding site" evidence="1">
    <location>
        <begin position="284"/>
        <end position="287"/>
    </location>
    <ligand>
        <name>GTP</name>
        <dbReference type="ChEBI" id="CHEBI:37565"/>
    </ligand>
</feature>
<feature type="binding site" evidence="1">
    <location>
        <begin position="320"/>
        <end position="322"/>
    </location>
    <ligand>
        <name>GTP</name>
        <dbReference type="ChEBI" id="CHEBI:37565"/>
    </ligand>
</feature>
<keyword id="KW-0963">Cytoplasm</keyword>
<keyword id="KW-0342">GTP-binding</keyword>
<keyword id="KW-0378">Hydrolase</keyword>
<keyword id="KW-0460">Magnesium</keyword>
<keyword id="KW-0479">Metal-binding</keyword>
<keyword id="KW-0547">Nucleotide-binding</keyword>
<keyword id="KW-1185">Reference proteome</keyword>
<name>OBG_ENTFA</name>
<dbReference type="EC" id="3.6.5.-" evidence="1"/>
<dbReference type="EMBL" id="AE016830">
    <property type="protein sequence ID" value="AAO81316.1"/>
    <property type="molecule type" value="Genomic_DNA"/>
</dbReference>
<dbReference type="RefSeq" id="NP_815246.2">
    <property type="nucleotide sequence ID" value="NC_004668.1"/>
</dbReference>
<dbReference type="SMR" id="Q834V4"/>
<dbReference type="STRING" id="226185.EF_1527"/>
<dbReference type="EnsemblBacteria" id="AAO81316">
    <property type="protein sequence ID" value="AAO81316"/>
    <property type="gene ID" value="EF_1527"/>
</dbReference>
<dbReference type="KEGG" id="efa:EF1527"/>
<dbReference type="PATRIC" id="fig|226185.45.peg.1975"/>
<dbReference type="eggNOG" id="COG0536">
    <property type="taxonomic scope" value="Bacteria"/>
</dbReference>
<dbReference type="HOGENOM" id="CLU_011747_2_0_9"/>
<dbReference type="Proteomes" id="UP000001415">
    <property type="component" value="Chromosome"/>
</dbReference>
<dbReference type="GO" id="GO:0005737">
    <property type="term" value="C:cytoplasm"/>
    <property type="evidence" value="ECO:0007669"/>
    <property type="project" value="UniProtKB-SubCell"/>
</dbReference>
<dbReference type="GO" id="GO:0005525">
    <property type="term" value="F:GTP binding"/>
    <property type="evidence" value="ECO:0007669"/>
    <property type="project" value="UniProtKB-UniRule"/>
</dbReference>
<dbReference type="GO" id="GO:0003924">
    <property type="term" value="F:GTPase activity"/>
    <property type="evidence" value="ECO:0007669"/>
    <property type="project" value="UniProtKB-UniRule"/>
</dbReference>
<dbReference type="GO" id="GO:0000287">
    <property type="term" value="F:magnesium ion binding"/>
    <property type="evidence" value="ECO:0007669"/>
    <property type="project" value="InterPro"/>
</dbReference>
<dbReference type="GO" id="GO:0042254">
    <property type="term" value="P:ribosome biogenesis"/>
    <property type="evidence" value="ECO:0007669"/>
    <property type="project" value="UniProtKB-UniRule"/>
</dbReference>
<dbReference type="CDD" id="cd01898">
    <property type="entry name" value="Obg"/>
    <property type="match status" value="1"/>
</dbReference>
<dbReference type="FunFam" id="2.70.210.12:FF:000001">
    <property type="entry name" value="GTPase Obg"/>
    <property type="match status" value="1"/>
</dbReference>
<dbReference type="FunFam" id="3.40.50.300:FF:000515">
    <property type="entry name" value="GTPase Obg"/>
    <property type="match status" value="1"/>
</dbReference>
<dbReference type="Gene3D" id="3.30.300.350">
    <property type="entry name" value="GTP-binding protein OBG, C-terminal domain"/>
    <property type="match status" value="1"/>
</dbReference>
<dbReference type="Gene3D" id="2.70.210.12">
    <property type="entry name" value="GTP1/OBG domain"/>
    <property type="match status" value="1"/>
</dbReference>
<dbReference type="Gene3D" id="3.40.50.300">
    <property type="entry name" value="P-loop containing nucleotide triphosphate hydrolases"/>
    <property type="match status" value="1"/>
</dbReference>
<dbReference type="HAMAP" id="MF_01454">
    <property type="entry name" value="GTPase_Obg"/>
    <property type="match status" value="1"/>
</dbReference>
<dbReference type="InterPro" id="IPR031167">
    <property type="entry name" value="G_OBG"/>
</dbReference>
<dbReference type="InterPro" id="IPR006073">
    <property type="entry name" value="GTP-bd"/>
</dbReference>
<dbReference type="InterPro" id="IPR014100">
    <property type="entry name" value="GTP-bd_Obg/CgtA"/>
</dbReference>
<dbReference type="InterPro" id="IPR036346">
    <property type="entry name" value="GTP-bd_prot_GTP1/OBG_C_sf"/>
</dbReference>
<dbReference type="InterPro" id="IPR006074">
    <property type="entry name" value="GTP1-OBG_CS"/>
</dbReference>
<dbReference type="InterPro" id="IPR006169">
    <property type="entry name" value="GTP1_OBG_dom"/>
</dbReference>
<dbReference type="InterPro" id="IPR036726">
    <property type="entry name" value="GTP1_OBG_dom_sf"/>
</dbReference>
<dbReference type="InterPro" id="IPR045086">
    <property type="entry name" value="OBG_GTPase"/>
</dbReference>
<dbReference type="InterPro" id="IPR015349">
    <property type="entry name" value="OCT_dom"/>
</dbReference>
<dbReference type="InterPro" id="IPR027417">
    <property type="entry name" value="P-loop_NTPase"/>
</dbReference>
<dbReference type="InterPro" id="IPR005225">
    <property type="entry name" value="Small_GTP-bd"/>
</dbReference>
<dbReference type="NCBIfam" id="TIGR02729">
    <property type="entry name" value="Obg_CgtA"/>
    <property type="match status" value="1"/>
</dbReference>
<dbReference type="NCBIfam" id="TIGR03595">
    <property type="entry name" value="Obg_CgtA_exten"/>
    <property type="match status" value="1"/>
</dbReference>
<dbReference type="NCBIfam" id="NF008954">
    <property type="entry name" value="PRK12296.1"/>
    <property type="match status" value="1"/>
</dbReference>
<dbReference type="NCBIfam" id="NF008955">
    <property type="entry name" value="PRK12297.1"/>
    <property type="match status" value="1"/>
</dbReference>
<dbReference type="NCBIfam" id="NF008956">
    <property type="entry name" value="PRK12299.1"/>
    <property type="match status" value="1"/>
</dbReference>
<dbReference type="NCBIfam" id="TIGR00231">
    <property type="entry name" value="small_GTP"/>
    <property type="match status" value="1"/>
</dbReference>
<dbReference type="PANTHER" id="PTHR11702">
    <property type="entry name" value="DEVELOPMENTALLY REGULATED GTP-BINDING PROTEIN-RELATED"/>
    <property type="match status" value="1"/>
</dbReference>
<dbReference type="PANTHER" id="PTHR11702:SF31">
    <property type="entry name" value="MITOCHONDRIAL RIBOSOME-ASSOCIATED GTPASE 2"/>
    <property type="match status" value="1"/>
</dbReference>
<dbReference type="Pfam" id="PF09269">
    <property type="entry name" value="DUF1967"/>
    <property type="match status" value="1"/>
</dbReference>
<dbReference type="Pfam" id="PF01018">
    <property type="entry name" value="GTP1_OBG"/>
    <property type="match status" value="1"/>
</dbReference>
<dbReference type="Pfam" id="PF01926">
    <property type="entry name" value="MMR_HSR1"/>
    <property type="match status" value="1"/>
</dbReference>
<dbReference type="PRINTS" id="PR00326">
    <property type="entry name" value="GTP1OBG"/>
</dbReference>
<dbReference type="SUPFAM" id="SSF102741">
    <property type="entry name" value="Obg GTP-binding protein C-terminal domain"/>
    <property type="match status" value="1"/>
</dbReference>
<dbReference type="SUPFAM" id="SSF82051">
    <property type="entry name" value="Obg GTP-binding protein N-terminal domain"/>
    <property type="match status" value="1"/>
</dbReference>
<dbReference type="SUPFAM" id="SSF52540">
    <property type="entry name" value="P-loop containing nucleoside triphosphate hydrolases"/>
    <property type="match status" value="1"/>
</dbReference>
<dbReference type="PROSITE" id="PS51710">
    <property type="entry name" value="G_OBG"/>
    <property type="match status" value="1"/>
</dbReference>
<dbReference type="PROSITE" id="PS00905">
    <property type="entry name" value="GTP1_OBG"/>
    <property type="match status" value="1"/>
</dbReference>
<dbReference type="PROSITE" id="PS51883">
    <property type="entry name" value="OBG"/>
    <property type="match status" value="1"/>
</dbReference>
<dbReference type="PROSITE" id="PS51881">
    <property type="entry name" value="OCT"/>
    <property type="match status" value="1"/>
</dbReference>
<organism>
    <name type="scientific">Enterococcus faecalis (strain ATCC 700802 / V583)</name>
    <dbReference type="NCBI Taxonomy" id="226185"/>
    <lineage>
        <taxon>Bacteria</taxon>
        <taxon>Bacillati</taxon>
        <taxon>Bacillota</taxon>
        <taxon>Bacilli</taxon>
        <taxon>Lactobacillales</taxon>
        <taxon>Enterococcaceae</taxon>
        <taxon>Enterococcus</taxon>
    </lineage>
</organism>
<evidence type="ECO:0000255" key="1">
    <source>
        <dbReference type="HAMAP-Rule" id="MF_01454"/>
    </source>
</evidence>
<evidence type="ECO:0000255" key="2">
    <source>
        <dbReference type="PROSITE-ProRule" id="PRU01229"/>
    </source>
</evidence>
<evidence type="ECO:0000255" key="3">
    <source>
        <dbReference type="PROSITE-ProRule" id="PRU01231"/>
    </source>
</evidence>
<evidence type="ECO:0000256" key="4">
    <source>
        <dbReference type="SAM" id="MobiDB-lite"/>
    </source>
</evidence>
<comment type="function">
    <text evidence="1">An essential GTPase which binds GTP, GDP and possibly (p)ppGpp with moderate affinity, with high nucleotide exchange rates and a fairly low GTP hydrolysis rate. Plays a role in control of the cell cycle, stress response, ribosome biogenesis and in those bacteria that undergo differentiation, in morphogenesis control.</text>
</comment>
<comment type="cofactor">
    <cofactor evidence="1">
        <name>Mg(2+)</name>
        <dbReference type="ChEBI" id="CHEBI:18420"/>
    </cofactor>
</comment>
<comment type="subunit">
    <text evidence="1">Monomer.</text>
</comment>
<comment type="subcellular location">
    <subcellularLocation>
        <location evidence="1">Cytoplasm</location>
    </subcellularLocation>
</comment>
<comment type="similarity">
    <text evidence="1">Belongs to the TRAFAC class OBG-HflX-like GTPase superfamily. OBG GTPase family.</text>
</comment>